<accession>O32113</accession>
<reference key="1">
    <citation type="journal article" date="1997" name="Nature">
        <title>The complete genome sequence of the Gram-positive bacterium Bacillus subtilis.</title>
        <authorList>
            <person name="Kunst F."/>
            <person name="Ogasawara N."/>
            <person name="Moszer I."/>
            <person name="Albertini A.M."/>
            <person name="Alloni G."/>
            <person name="Azevedo V."/>
            <person name="Bertero M.G."/>
            <person name="Bessieres P."/>
            <person name="Bolotin A."/>
            <person name="Borchert S."/>
            <person name="Borriss R."/>
            <person name="Boursier L."/>
            <person name="Brans A."/>
            <person name="Braun M."/>
            <person name="Brignell S.C."/>
            <person name="Bron S."/>
            <person name="Brouillet S."/>
            <person name="Bruschi C.V."/>
            <person name="Caldwell B."/>
            <person name="Capuano V."/>
            <person name="Carter N.M."/>
            <person name="Choi S.-K."/>
            <person name="Codani J.-J."/>
            <person name="Connerton I.F."/>
            <person name="Cummings N.J."/>
            <person name="Daniel R.A."/>
            <person name="Denizot F."/>
            <person name="Devine K.M."/>
            <person name="Duesterhoeft A."/>
            <person name="Ehrlich S.D."/>
            <person name="Emmerson P.T."/>
            <person name="Entian K.-D."/>
            <person name="Errington J."/>
            <person name="Fabret C."/>
            <person name="Ferrari E."/>
            <person name="Foulger D."/>
            <person name="Fritz C."/>
            <person name="Fujita M."/>
            <person name="Fujita Y."/>
            <person name="Fuma S."/>
            <person name="Galizzi A."/>
            <person name="Galleron N."/>
            <person name="Ghim S.-Y."/>
            <person name="Glaser P."/>
            <person name="Goffeau A."/>
            <person name="Golightly E.J."/>
            <person name="Grandi G."/>
            <person name="Guiseppi G."/>
            <person name="Guy B.J."/>
            <person name="Haga K."/>
            <person name="Haiech J."/>
            <person name="Harwood C.R."/>
            <person name="Henaut A."/>
            <person name="Hilbert H."/>
            <person name="Holsappel S."/>
            <person name="Hosono S."/>
            <person name="Hullo M.-F."/>
            <person name="Itaya M."/>
            <person name="Jones L.-M."/>
            <person name="Joris B."/>
            <person name="Karamata D."/>
            <person name="Kasahara Y."/>
            <person name="Klaerr-Blanchard M."/>
            <person name="Klein C."/>
            <person name="Kobayashi Y."/>
            <person name="Koetter P."/>
            <person name="Koningstein G."/>
            <person name="Krogh S."/>
            <person name="Kumano M."/>
            <person name="Kurita K."/>
            <person name="Lapidus A."/>
            <person name="Lardinois S."/>
            <person name="Lauber J."/>
            <person name="Lazarevic V."/>
            <person name="Lee S.-M."/>
            <person name="Levine A."/>
            <person name="Liu H."/>
            <person name="Masuda S."/>
            <person name="Mauel C."/>
            <person name="Medigue C."/>
            <person name="Medina N."/>
            <person name="Mellado R.P."/>
            <person name="Mizuno M."/>
            <person name="Moestl D."/>
            <person name="Nakai S."/>
            <person name="Noback M."/>
            <person name="Noone D."/>
            <person name="O'Reilly M."/>
            <person name="Ogawa K."/>
            <person name="Ogiwara A."/>
            <person name="Oudega B."/>
            <person name="Park S.-H."/>
            <person name="Parro V."/>
            <person name="Pohl T.M."/>
            <person name="Portetelle D."/>
            <person name="Porwollik S."/>
            <person name="Prescott A.M."/>
            <person name="Presecan E."/>
            <person name="Pujic P."/>
            <person name="Purnelle B."/>
            <person name="Rapoport G."/>
            <person name="Rey M."/>
            <person name="Reynolds S."/>
            <person name="Rieger M."/>
            <person name="Rivolta C."/>
            <person name="Rocha E."/>
            <person name="Roche B."/>
            <person name="Rose M."/>
            <person name="Sadaie Y."/>
            <person name="Sato T."/>
            <person name="Scanlan E."/>
            <person name="Schleich S."/>
            <person name="Schroeter R."/>
            <person name="Scoffone F."/>
            <person name="Sekiguchi J."/>
            <person name="Sekowska A."/>
            <person name="Seror S.J."/>
            <person name="Serror P."/>
            <person name="Shin B.-S."/>
            <person name="Soldo B."/>
            <person name="Sorokin A."/>
            <person name="Tacconi E."/>
            <person name="Takagi T."/>
            <person name="Takahashi H."/>
            <person name="Takemaru K."/>
            <person name="Takeuchi M."/>
            <person name="Tamakoshi A."/>
            <person name="Tanaka T."/>
            <person name="Terpstra P."/>
            <person name="Tognoni A."/>
            <person name="Tosato V."/>
            <person name="Uchiyama S."/>
            <person name="Vandenbol M."/>
            <person name="Vannier F."/>
            <person name="Vassarotti A."/>
            <person name="Viari A."/>
            <person name="Wambutt R."/>
            <person name="Wedler E."/>
            <person name="Wedler H."/>
            <person name="Weitzenegger T."/>
            <person name="Winters P."/>
            <person name="Wipat A."/>
            <person name="Yamamoto H."/>
            <person name="Yamane K."/>
            <person name="Yasumoto K."/>
            <person name="Yata K."/>
            <person name="Yoshida K."/>
            <person name="Yoshikawa H.-F."/>
            <person name="Zumstein E."/>
            <person name="Yoshikawa H."/>
            <person name="Danchin A."/>
        </authorList>
    </citation>
    <scope>NUCLEOTIDE SEQUENCE [LARGE SCALE GENOMIC DNA]</scope>
    <source>
        <strain>168</strain>
    </source>
</reference>
<reference key="2">
    <citation type="journal article" date="2010" name="J. Bacteriol.">
        <title>SufU is an essential iron-sulfur cluster scaffold protein in Bacillus subtilis.</title>
        <authorList>
            <person name="Albrecht A.G."/>
            <person name="Netz D.J."/>
            <person name="Miethke M."/>
            <person name="Pierik A.J."/>
            <person name="Burghaus O."/>
            <person name="Peuckert F."/>
            <person name="Lill R."/>
            <person name="Marahiel M.A."/>
        </authorList>
    </citation>
    <scope>DISRUPTION PHENOTYPE</scope>
    <source>
        <strain>168</strain>
    </source>
</reference>
<protein>
    <recommendedName>
        <fullName>Uncharacterized protein SufA</fullName>
    </recommendedName>
</protein>
<organism>
    <name type="scientific">Bacillus subtilis (strain 168)</name>
    <dbReference type="NCBI Taxonomy" id="224308"/>
    <lineage>
        <taxon>Bacteria</taxon>
        <taxon>Bacillati</taxon>
        <taxon>Bacillota</taxon>
        <taxon>Bacilli</taxon>
        <taxon>Bacillales</taxon>
        <taxon>Bacillaceae</taxon>
        <taxon>Bacillus</taxon>
    </lineage>
</organism>
<sequence length="120" mass="12751">MSNPVTITEAAALHIKDMMKEHEEENAFLRVGVKGGGCSGLSYGMGFEHEKSESDSVFDQHGITVLVDKESLDIMNGTVIDYKQSMLGGGFTIDNPNAIASCGCGSSFRTATNAGKPEEC</sequence>
<feature type="chain" id="PRO_0000077011" description="Uncharacterized protein SufA">
    <location>
        <begin position="1"/>
        <end position="120"/>
    </location>
</feature>
<keyword id="KW-1185">Reference proteome</keyword>
<comment type="disruption phenotype">
    <text evidence="1">Not essential for growth on minimal medium.</text>
</comment>
<comment type="similarity">
    <text evidence="2">Belongs to the HesB/IscA family.</text>
</comment>
<dbReference type="EMBL" id="AL009126">
    <property type="protein sequence ID" value="CAB15206.1"/>
    <property type="molecule type" value="Genomic_DNA"/>
</dbReference>
<dbReference type="PIR" id="G70024">
    <property type="entry name" value="G70024"/>
</dbReference>
<dbReference type="RefSeq" id="NP_391096.1">
    <property type="nucleotide sequence ID" value="NC_000964.3"/>
</dbReference>
<dbReference type="RefSeq" id="WP_003244166.1">
    <property type="nucleotide sequence ID" value="NZ_OZ025638.1"/>
</dbReference>
<dbReference type="SMR" id="O32113"/>
<dbReference type="FunCoup" id="O32113">
    <property type="interactions" value="504"/>
</dbReference>
<dbReference type="STRING" id="224308.BSU32160"/>
<dbReference type="jPOST" id="O32113"/>
<dbReference type="PaxDb" id="224308-BSU32160"/>
<dbReference type="EnsemblBacteria" id="CAB15206">
    <property type="protein sequence ID" value="CAB15206"/>
    <property type="gene ID" value="BSU_32160"/>
</dbReference>
<dbReference type="GeneID" id="936627"/>
<dbReference type="KEGG" id="bsu:BSU32160"/>
<dbReference type="PATRIC" id="fig|224308.179.peg.3482"/>
<dbReference type="eggNOG" id="COG0316">
    <property type="taxonomic scope" value="Bacteria"/>
</dbReference>
<dbReference type="InParanoid" id="O32113"/>
<dbReference type="OrthoDB" id="9801228at2"/>
<dbReference type="PhylomeDB" id="O32113"/>
<dbReference type="BioCyc" id="BSUB:BSU32160-MONOMER"/>
<dbReference type="Proteomes" id="UP000001570">
    <property type="component" value="Chromosome"/>
</dbReference>
<dbReference type="GO" id="GO:0005737">
    <property type="term" value="C:cytoplasm"/>
    <property type="evidence" value="ECO:0000318"/>
    <property type="project" value="GO_Central"/>
</dbReference>
<dbReference type="GO" id="GO:0051537">
    <property type="term" value="F:2 iron, 2 sulfur cluster binding"/>
    <property type="evidence" value="ECO:0000318"/>
    <property type="project" value="GO_Central"/>
</dbReference>
<dbReference type="GO" id="GO:0016226">
    <property type="term" value="P:iron-sulfur cluster assembly"/>
    <property type="evidence" value="ECO:0000318"/>
    <property type="project" value="GO_Central"/>
</dbReference>
<dbReference type="FunFam" id="2.60.300.12:FF:000007">
    <property type="entry name" value="Iron-sulfur cluster assembly accessory protein"/>
    <property type="match status" value="1"/>
</dbReference>
<dbReference type="Gene3D" id="2.60.300.12">
    <property type="entry name" value="HesB-like domain"/>
    <property type="match status" value="1"/>
</dbReference>
<dbReference type="InterPro" id="IPR000361">
    <property type="entry name" value="FeS_biogenesis"/>
</dbReference>
<dbReference type="InterPro" id="IPR016092">
    <property type="entry name" value="FeS_cluster_insertion"/>
</dbReference>
<dbReference type="InterPro" id="IPR017870">
    <property type="entry name" value="FeS_cluster_insertion_CS"/>
</dbReference>
<dbReference type="InterPro" id="IPR035903">
    <property type="entry name" value="HesB-like_dom_sf"/>
</dbReference>
<dbReference type="InterPro" id="IPR031108">
    <property type="entry name" value="ISCA_plant_cyanobact"/>
</dbReference>
<dbReference type="NCBIfam" id="TIGR00049">
    <property type="entry name" value="iron-sulfur cluster assembly accessory protein"/>
    <property type="match status" value="1"/>
</dbReference>
<dbReference type="PANTHER" id="PTHR47265">
    <property type="entry name" value="IRON-SULFUR ASSEMBLY PROTEIN ISCA, CHLOROPLASTIC"/>
    <property type="match status" value="1"/>
</dbReference>
<dbReference type="PANTHER" id="PTHR47265:SF1">
    <property type="entry name" value="IRON-SULFUR ASSEMBLY PROTEIN ISCA, CHLOROPLASTIC"/>
    <property type="match status" value="1"/>
</dbReference>
<dbReference type="Pfam" id="PF01521">
    <property type="entry name" value="Fe-S_biosyn"/>
    <property type="match status" value="1"/>
</dbReference>
<dbReference type="SUPFAM" id="SSF89360">
    <property type="entry name" value="HesB-like domain"/>
    <property type="match status" value="1"/>
</dbReference>
<dbReference type="PROSITE" id="PS01152">
    <property type="entry name" value="HESB"/>
    <property type="match status" value="1"/>
</dbReference>
<proteinExistence type="inferred from homology"/>
<evidence type="ECO:0000269" key="1">
    <source>
    </source>
</evidence>
<evidence type="ECO:0000305" key="2"/>
<name>SUFA_BACSU</name>
<gene>
    <name type="primary">sufA</name>
    <name type="synonym">yutM</name>
    <name type="ordered locus">BSU32160</name>
</gene>